<comment type="function">
    <text>May function as a co-chaperone.</text>
</comment>
<comment type="subcellular location">
    <subcellularLocation>
        <location evidence="3">Membrane</location>
        <topology evidence="3">Multi-pass membrane protein</topology>
    </subcellularLocation>
</comment>
<accession>Q5PR00</accession>
<keyword id="KW-0143">Chaperone</keyword>
<keyword id="KW-0472">Membrane</keyword>
<keyword id="KW-1185">Reference proteome</keyword>
<keyword id="KW-0812">Transmembrane</keyword>
<keyword id="KW-1133">Transmembrane helix</keyword>
<feature type="chain" id="PRO_0000325865" description="DnaJ homolog subfamily C member 22">
    <location>
        <begin position="1"/>
        <end position="341"/>
    </location>
</feature>
<feature type="transmembrane region" description="Helical" evidence="1">
    <location>
        <begin position="5"/>
        <end position="25"/>
    </location>
</feature>
<feature type="transmembrane region" description="Helical" evidence="1">
    <location>
        <begin position="30"/>
        <end position="50"/>
    </location>
</feature>
<feature type="transmembrane region" description="Helical" evidence="1">
    <location>
        <begin position="81"/>
        <end position="101"/>
    </location>
</feature>
<feature type="transmembrane region" description="Helical" evidence="1">
    <location>
        <begin position="105"/>
        <end position="125"/>
    </location>
</feature>
<feature type="transmembrane region" description="Helical" evidence="1">
    <location>
        <begin position="135"/>
        <end position="155"/>
    </location>
</feature>
<feature type="transmembrane region" description="Helical" evidence="1">
    <location>
        <begin position="185"/>
        <end position="205"/>
    </location>
</feature>
<feature type="transmembrane region" description="Helical" evidence="1">
    <location>
        <begin position="232"/>
        <end position="252"/>
    </location>
</feature>
<feature type="domain" description="TM2" evidence="1">
    <location>
        <begin position="4"/>
        <end position="50"/>
    </location>
</feature>
<feature type="domain" description="J" evidence="2">
    <location>
        <begin position="277"/>
        <end position="341"/>
    </location>
</feature>
<evidence type="ECO:0000255" key="1"/>
<evidence type="ECO:0000255" key="2">
    <source>
        <dbReference type="PROSITE-ProRule" id="PRU00286"/>
    </source>
</evidence>
<evidence type="ECO:0000305" key="3"/>
<dbReference type="EMBL" id="BC086949">
    <property type="protein sequence ID" value="AAH86949.1"/>
    <property type="molecule type" value="mRNA"/>
</dbReference>
<dbReference type="RefSeq" id="NP_001014226.1">
    <property type="nucleotide sequence ID" value="NM_001014204.1"/>
</dbReference>
<dbReference type="RefSeq" id="XP_006257425.1">
    <property type="nucleotide sequence ID" value="XM_006257363.5"/>
</dbReference>
<dbReference type="SMR" id="Q5PR00"/>
<dbReference type="FunCoup" id="Q5PR00">
    <property type="interactions" value="284"/>
</dbReference>
<dbReference type="STRING" id="10116.ENSRNOP00000073678"/>
<dbReference type="PhosphoSitePlus" id="Q5PR00"/>
<dbReference type="PaxDb" id="10116-ENSRNOP00000021339"/>
<dbReference type="Ensembl" id="ENSRNOT00000087932.2">
    <property type="protein sequence ID" value="ENSRNOP00000073678.1"/>
    <property type="gene ID" value="ENSRNOG00000053498.2"/>
</dbReference>
<dbReference type="GeneID" id="362998"/>
<dbReference type="KEGG" id="rno:362998"/>
<dbReference type="AGR" id="RGD:1311098"/>
<dbReference type="CTD" id="79962"/>
<dbReference type="RGD" id="1311098">
    <property type="gene designation" value="Dnajc22"/>
</dbReference>
<dbReference type="eggNOG" id="KOG0714">
    <property type="taxonomic scope" value="Eukaryota"/>
</dbReference>
<dbReference type="GeneTree" id="ENSGT00390000012136"/>
<dbReference type="HOGENOM" id="CLU_057927_1_0_1"/>
<dbReference type="InParanoid" id="Q5PR00"/>
<dbReference type="OMA" id="VWWHCLL"/>
<dbReference type="OrthoDB" id="10262359at2759"/>
<dbReference type="PhylomeDB" id="Q5PR00"/>
<dbReference type="TreeFam" id="TF324581"/>
<dbReference type="PRO" id="PR:Q5PR00"/>
<dbReference type="Proteomes" id="UP000002494">
    <property type="component" value="Chromosome 7"/>
</dbReference>
<dbReference type="Bgee" id="ENSRNOG00000053498">
    <property type="expression patterns" value="Expressed in liver and 17 other cell types or tissues"/>
</dbReference>
<dbReference type="GO" id="GO:0016020">
    <property type="term" value="C:membrane"/>
    <property type="evidence" value="ECO:0000318"/>
    <property type="project" value="GO_Central"/>
</dbReference>
<dbReference type="CDD" id="cd06257">
    <property type="entry name" value="DnaJ"/>
    <property type="match status" value="1"/>
</dbReference>
<dbReference type="Gene3D" id="1.10.287.110">
    <property type="entry name" value="DnaJ domain"/>
    <property type="match status" value="1"/>
</dbReference>
<dbReference type="InterPro" id="IPR001623">
    <property type="entry name" value="DnaJ_domain"/>
</dbReference>
<dbReference type="InterPro" id="IPR036869">
    <property type="entry name" value="J_dom_sf"/>
</dbReference>
<dbReference type="InterPro" id="IPR007829">
    <property type="entry name" value="TM2"/>
</dbReference>
<dbReference type="PANTHER" id="PTHR44733">
    <property type="entry name" value="DNAJ HOMOLOG SUBFAMILY C MEMBER 22"/>
    <property type="match status" value="1"/>
</dbReference>
<dbReference type="PANTHER" id="PTHR44733:SF1">
    <property type="entry name" value="DNAJ HOMOLOG SUBFAMILY C MEMBER 22"/>
    <property type="match status" value="1"/>
</dbReference>
<dbReference type="Pfam" id="PF00226">
    <property type="entry name" value="DnaJ"/>
    <property type="match status" value="1"/>
</dbReference>
<dbReference type="Pfam" id="PF05154">
    <property type="entry name" value="TM2"/>
    <property type="match status" value="1"/>
</dbReference>
<dbReference type="PRINTS" id="PR00625">
    <property type="entry name" value="JDOMAIN"/>
</dbReference>
<dbReference type="SMART" id="SM00271">
    <property type="entry name" value="DnaJ"/>
    <property type="match status" value="1"/>
</dbReference>
<dbReference type="SUPFAM" id="SSF46565">
    <property type="entry name" value="Chaperone J-domain"/>
    <property type="match status" value="1"/>
</dbReference>
<dbReference type="PROSITE" id="PS50076">
    <property type="entry name" value="DNAJ_2"/>
    <property type="match status" value="1"/>
</dbReference>
<reference key="1">
    <citation type="journal article" date="2004" name="Genome Res.">
        <title>The status, quality, and expansion of the NIH full-length cDNA project: the Mammalian Gene Collection (MGC).</title>
        <authorList>
            <consortium name="The MGC Project Team"/>
        </authorList>
    </citation>
    <scope>NUCLEOTIDE SEQUENCE [LARGE SCALE MRNA]</scope>
    <source>
        <tissue>Liver</tissue>
    </source>
</reference>
<gene>
    <name type="primary">Dnajc22</name>
</gene>
<sequence length="341" mass="38243">MAKGLLMTYALWAFGGPVGLHHLYLGRDSHALLWMLTLGGGGLGWLWEFWKLPSFVAQANGVQSWKQRPEEERPPLSLLRFASQMVVGVYFGLVALISLSSTANFYIVGLPLAVGLGVLLVAAVGNQTSDFKNTLGAAFLTSPVFYGRPIAILPISLAASITAQKHRRYKVSAVSETLSVRLYRVGLAYLAFTGPLAYSTLYNTAATINYAAETLGSFLSWFNFFPLLGRLVESVLLLPCRIWWLLVGAPGFNSSQFQEWEKLYEFVDSFQDEKRQLAHQVLGIPEGATNEEIHRSYRDLVKVWHPDHNRHQTEEAQRHFLEIQAAYEVLSQPKKPRASWR</sequence>
<name>DJC22_RAT</name>
<organism>
    <name type="scientific">Rattus norvegicus</name>
    <name type="common">Rat</name>
    <dbReference type="NCBI Taxonomy" id="10116"/>
    <lineage>
        <taxon>Eukaryota</taxon>
        <taxon>Metazoa</taxon>
        <taxon>Chordata</taxon>
        <taxon>Craniata</taxon>
        <taxon>Vertebrata</taxon>
        <taxon>Euteleostomi</taxon>
        <taxon>Mammalia</taxon>
        <taxon>Eutheria</taxon>
        <taxon>Euarchontoglires</taxon>
        <taxon>Glires</taxon>
        <taxon>Rodentia</taxon>
        <taxon>Myomorpha</taxon>
        <taxon>Muroidea</taxon>
        <taxon>Muridae</taxon>
        <taxon>Murinae</taxon>
        <taxon>Rattus</taxon>
    </lineage>
</organism>
<proteinExistence type="evidence at transcript level"/>
<protein>
    <recommendedName>
        <fullName>DnaJ homolog subfamily C member 22</fullName>
    </recommendedName>
</protein>